<accession>P21161</accession>
<accession>C7CG48</accession>
<proteinExistence type="evidence at protein level"/>
<reference key="1">
    <citation type="journal article" date="1990" name="J. Bacteriol.">
        <title>Sequence analysis and expression of the bacterial dichloromethane dehalogenase structural gene, a member of the glutathione S-transferase supergene family.</title>
        <authorList>
            <person name="la Roche S.D."/>
            <person name="Leisinger T."/>
        </authorList>
    </citation>
    <scope>NUCLEOTIDE SEQUENCE [GENOMIC DNA]</scope>
</reference>
<reference key="2">
    <citation type="journal article" date="2009" name="PLoS ONE">
        <title>Methylobacterium genome sequences: a reference blueprint to investigate microbial metabolism of C1 compounds from natural and industrial sources.</title>
        <authorList>
            <person name="Vuilleumier S."/>
            <person name="Chistoserdova L."/>
            <person name="Lee M.-C."/>
            <person name="Bringel F."/>
            <person name="Lajus A."/>
            <person name="Zhou Y."/>
            <person name="Gourion B."/>
            <person name="Barbe V."/>
            <person name="Chang J."/>
            <person name="Cruveiller S."/>
            <person name="Dossat C."/>
            <person name="Gillett W."/>
            <person name="Gruffaz C."/>
            <person name="Haugen E."/>
            <person name="Hourcade E."/>
            <person name="Levy R."/>
            <person name="Mangenot S."/>
            <person name="Muller E."/>
            <person name="Nadalig T."/>
            <person name="Pagni M."/>
            <person name="Penny C."/>
            <person name="Peyraud R."/>
            <person name="Robinson D.G."/>
            <person name="Roche D."/>
            <person name="Rouy Z."/>
            <person name="Saenampechek C."/>
            <person name="Salvignol G."/>
            <person name="Vallenet D."/>
            <person name="Wu Z."/>
            <person name="Marx C.J."/>
            <person name="Vorholt J.A."/>
            <person name="Olson M.V."/>
            <person name="Kaul R."/>
            <person name="Weissenbach J."/>
            <person name="Medigue C."/>
            <person name="Lidstrom M.E."/>
        </authorList>
    </citation>
    <scope>NUCLEOTIDE SEQUENCE [LARGE SCALE GENOMIC DNA]</scope>
    <source>
        <strain>DSM 6343 / CIP 106787 / DM4</strain>
    </source>
</reference>
<reference key="3">
    <citation type="journal article" date="1986" name="J. Gen. Microbiol.">
        <title>Evidence for identical dichloromethane dehalogenases in different methylotrophic bacteria.</title>
        <authorList>
            <person name="Kohler-Staub D."/>
            <person name="Hartmans S."/>
            <person name="Gaelli R."/>
            <person name="Suter F."/>
            <person name="Leisinger T."/>
        </authorList>
    </citation>
    <scope>PROTEIN SEQUENCE OF 1-15</scope>
</reference>
<dbReference type="EC" id="4.5.1.3"/>
<dbReference type="EMBL" id="M32346">
    <property type="protein sequence ID" value="AAB68954.1"/>
    <property type="molecule type" value="Genomic_DNA"/>
</dbReference>
<dbReference type="EMBL" id="FP103042">
    <property type="protein sequence ID" value="CAX24312.1"/>
    <property type="status" value="ALT_INIT"/>
    <property type="molecule type" value="Genomic_DNA"/>
</dbReference>
<dbReference type="PIR" id="A47654">
    <property type="entry name" value="A47654"/>
</dbReference>
<dbReference type="RefSeq" id="WP_041357702.1">
    <property type="nucleotide sequence ID" value="NC_012988.1"/>
</dbReference>
<dbReference type="SMR" id="P21161"/>
<dbReference type="GeneID" id="72989601"/>
<dbReference type="KEGG" id="mdi:METDI2656"/>
<dbReference type="HOGENOM" id="CLU_965672_0_0_5"/>
<dbReference type="BRENDA" id="4.5.1.3">
    <property type="organism ID" value="3296"/>
</dbReference>
<dbReference type="UniPathway" id="UPA00688"/>
<dbReference type="Proteomes" id="UP000008070">
    <property type="component" value="Chromosome"/>
</dbReference>
<dbReference type="GO" id="GO:0005737">
    <property type="term" value="C:cytoplasm"/>
    <property type="evidence" value="ECO:0007669"/>
    <property type="project" value="UniProtKB-SubCell"/>
</dbReference>
<dbReference type="GO" id="GO:0018834">
    <property type="term" value="F:dichloromethane dehalogenase activity"/>
    <property type="evidence" value="ECO:0007669"/>
    <property type="project" value="UniProtKB-EC"/>
</dbReference>
<dbReference type="GO" id="GO:0004364">
    <property type="term" value="F:glutathione transferase activity"/>
    <property type="evidence" value="ECO:0007669"/>
    <property type="project" value="TreeGrafter"/>
</dbReference>
<dbReference type="GO" id="GO:0006749">
    <property type="term" value="P:glutathione metabolic process"/>
    <property type="evidence" value="ECO:0007669"/>
    <property type="project" value="TreeGrafter"/>
</dbReference>
<dbReference type="CDD" id="cd03183">
    <property type="entry name" value="GST_C_Theta"/>
    <property type="match status" value="1"/>
</dbReference>
<dbReference type="Gene3D" id="1.20.1050.10">
    <property type="match status" value="1"/>
</dbReference>
<dbReference type="Gene3D" id="3.40.30.10">
    <property type="entry name" value="Glutaredoxin"/>
    <property type="match status" value="1"/>
</dbReference>
<dbReference type="InterPro" id="IPR010987">
    <property type="entry name" value="Glutathione-S-Trfase_C-like"/>
</dbReference>
<dbReference type="InterPro" id="IPR036282">
    <property type="entry name" value="Glutathione-S-Trfase_C_sf"/>
</dbReference>
<dbReference type="InterPro" id="IPR040079">
    <property type="entry name" value="Glutathione_S-Trfase"/>
</dbReference>
<dbReference type="InterPro" id="IPR004045">
    <property type="entry name" value="Glutathione_S-Trfase_N"/>
</dbReference>
<dbReference type="InterPro" id="IPR004046">
    <property type="entry name" value="GST_C"/>
</dbReference>
<dbReference type="InterPro" id="IPR040077">
    <property type="entry name" value="GST_C_Theta"/>
</dbReference>
<dbReference type="InterPro" id="IPR051369">
    <property type="entry name" value="GST_Theta"/>
</dbReference>
<dbReference type="InterPro" id="IPR036249">
    <property type="entry name" value="Thioredoxin-like_sf"/>
</dbReference>
<dbReference type="PANTHER" id="PTHR43917">
    <property type="match status" value="1"/>
</dbReference>
<dbReference type="PANTHER" id="PTHR43917:SF8">
    <property type="entry name" value="GH16740P-RELATED"/>
    <property type="match status" value="1"/>
</dbReference>
<dbReference type="Pfam" id="PF00043">
    <property type="entry name" value="GST_C"/>
    <property type="match status" value="1"/>
</dbReference>
<dbReference type="Pfam" id="PF02798">
    <property type="entry name" value="GST_N"/>
    <property type="match status" value="1"/>
</dbReference>
<dbReference type="SFLD" id="SFLDS00019">
    <property type="entry name" value="Glutathione_Transferase_(cytos"/>
    <property type="match status" value="1"/>
</dbReference>
<dbReference type="SFLD" id="SFLDG00358">
    <property type="entry name" value="Main_(cytGST)"/>
    <property type="match status" value="1"/>
</dbReference>
<dbReference type="SUPFAM" id="SSF47616">
    <property type="entry name" value="GST C-terminal domain-like"/>
    <property type="match status" value="1"/>
</dbReference>
<dbReference type="SUPFAM" id="SSF52833">
    <property type="entry name" value="Thioredoxin-like"/>
    <property type="match status" value="1"/>
</dbReference>
<dbReference type="PROSITE" id="PS50405">
    <property type="entry name" value="GST_CTER"/>
    <property type="match status" value="1"/>
</dbReference>
<dbReference type="PROSITE" id="PS50404">
    <property type="entry name" value="GST_NTER"/>
    <property type="match status" value="1"/>
</dbReference>
<protein>
    <recommendedName>
        <fullName>Dichloromethane dehalogenase</fullName>
        <shortName>DCM dehalogenase</shortName>
        <ecNumber>4.5.1.3</ecNumber>
    </recommendedName>
</protein>
<evidence type="ECO:0000305" key="1"/>
<keyword id="KW-0963">Cytoplasm</keyword>
<keyword id="KW-0903">Direct protein sequencing</keyword>
<keyword id="KW-0456">Lyase</keyword>
<comment type="catalytic activity">
    <reaction>
        <text>dichloromethane + H2O = formaldehyde + 2 chloride + 2 H(+)</text>
        <dbReference type="Rhea" id="RHEA:15397"/>
        <dbReference type="ChEBI" id="CHEBI:15377"/>
        <dbReference type="ChEBI" id="CHEBI:15378"/>
        <dbReference type="ChEBI" id="CHEBI:15767"/>
        <dbReference type="ChEBI" id="CHEBI:16842"/>
        <dbReference type="ChEBI" id="CHEBI:17996"/>
        <dbReference type="EC" id="4.5.1.3"/>
    </reaction>
</comment>
<comment type="pathway">
    <text>Xenobiotic degradation; dichloromethane degradation.</text>
</comment>
<comment type="subunit">
    <text>Homohexamer.</text>
</comment>
<comment type="subcellular location">
    <subcellularLocation>
        <location evidence="1">Cytoplasm</location>
    </subcellularLocation>
</comment>
<comment type="induction">
    <text>By dichloromethane.</text>
</comment>
<comment type="similarity">
    <text evidence="1">Belongs to the GST superfamily.</text>
</comment>
<comment type="sequence caution" evidence="1">
    <conflict type="erroneous initiation">
        <sequence resource="EMBL-CDS" id="CAX24312"/>
    </conflict>
</comment>
<gene>
    <name type="primary">dcmA</name>
    <name type="ordered locus">METDI2656</name>
</gene>
<sequence>MSPNPTNIHTGKTLRLLYHPASQPCRSAHQFMYEIDVPFEEEVVDISTDITERQEFRDKYNPTGQVPILVDGEFTVWESVAIARYVNEKFDGAGNWFGRGTQERAQINQFLQWYAYTLRLGGGAFHWNIFGCLIYGEKPYSPKFTAEQNKGRTLLYEAMGTLENYWLRDREYVCGDEVSYADLAAFHEFVSHEAGKIIPDRVWQGFPKIAAWFKKLSERPHAKTVSEWQYTNVGKIIRGELTASMFKRKTAVLKGTEVFSGHNHGIPYLNEKAEDYFKRVEKEGAAVA</sequence>
<name>DCMA_METED</name>
<feature type="chain" id="PRO_0000185990" description="Dichloromethane dehalogenase">
    <location>
        <begin position="1"/>
        <end position="288"/>
    </location>
</feature>
<feature type="domain" description="GST N-terminal">
    <location>
        <begin position="12"/>
        <end position="94"/>
    </location>
</feature>
<feature type="domain" description="GST C-terminal">
    <location>
        <begin position="100"/>
        <end position="252"/>
    </location>
</feature>
<feature type="sequence variant" description="In 50 to 66% of the proteins.">
    <location>
        <position position="1"/>
    </location>
</feature>
<organism>
    <name type="scientific">Methylorubrum extorquens (strain DSM 6343 / CIP 106787 / DM4)</name>
    <name type="common">Methylobacterium extorquens</name>
    <dbReference type="NCBI Taxonomy" id="661410"/>
    <lineage>
        <taxon>Bacteria</taxon>
        <taxon>Pseudomonadati</taxon>
        <taxon>Pseudomonadota</taxon>
        <taxon>Alphaproteobacteria</taxon>
        <taxon>Hyphomicrobiales</taxon>
        <taxon>Methylobacteriaceae</taxon>
        <taxon>Methylorubrum</taxon>
    </lineage>
</organism>